<organism>
    <name type="scientific">Chiloscyllium indicum</name>
    <name type="common">Slender bamboo shark</name>
    <name type="synonym">Chiloscyllium colax</name>
    <dbReference type="NCBI Taxonomy" id="443761"/>
    <lineage>
        <taxon>Eukaryota</taxon>
        <taxon>Metazoa</taxon>
        <taxon>Chordata</taxon>
        <taxon>Craniata</taxon>
        <taxon>Vertebrata</taxon>
        <taxon>Chondrichthyes</taxon>
        <taxon>Elasmobranchii</taxon>
        <taxon>Galeomorphii</taxon>
        <taxon>Galeoidea</taxon>
        <taxon>Orectolobiformes</taxon>
        <taxon>Hemiscylliidae</taxon>
        <taxon>Chiloscyllium</taxon>
    </lineage>
</organism>
<accession>P48646</accession>
<name>CRGS1_CHIID</name>
<reference key="1">
    <citation type="journal article" date="1997" name="Biochem. Biophys. Res. Commun.">
        <title>Characterization of gamma S-crystallin isoforms from lip shark (Chiloscyllium colax): evolutionary comparison between gamma S and beta/gamma crystallins.</title>
        <authorList>
            <person name="Pan F.-M."/>
            <person name="Chuang M.-H."/>
            <person name="Chiou S.-H."/>
        </authorList>
    </citation>
    <scope>NUCLEOTIDE SEQUENCE [MRNA]</scope>
    <source>
        <tissue>Lens</tissue>
    </source>
</reference>
<protein>
    <recommendedName>
        <fullName>Gamma-crystallin S-1</fullName>
    </recommendedName>
    <alternativeName>
        <fullName>Beta-crystallin S-1</fullName>
    </alternativeName>
</protein>
<gene>
    <name type="primary">GS-1</name>
</gene>
<sequence length="173" mass="21259">MGKIIFYEDRNFQGRHYECSSDCADLSPYFSRCNSIRVESDWWVLYEKPNYMGYQYVLTRGEYPDYQRWMGFNDCVRSCRMLPHTGRSYRMRIYERLTFGGQMMEIMDDCPSVYDRFRYRDIHSCQVMDGYWIFYEHPNYRGRQYFMRPGEYRRYSDWGGYSSTVGSLRRIME</sequence>
<proteinExistence type="evidence at transcript level"/>
<keyword id="KW-0273">Eye lens protein</keyword>
<keyword id="KW-0677">Repeat</keyword>
<feature type="initiator methionine" description="Removed" evidence="1">
    <location>
        <position position="1"/>
    </location>
</feature>
<feature type="chain" id="PRO_0000057568" description="Gamma-crystallin S-1">
    <location>
        <begin position="2"/>
        <end position="173"/>
    </location>
</feature>
<feature type="domain" description="Beta/gamma crystallin 'Greek key' 1" evidence="2">
    <location>
        <begin position="2"/>
        <end position="40"/>
    </location>
</feature>
<feature type="domain" description="Beta/gamma crystallin 'Greek key' 2" evidence="2">
    <location>
        <begin position="41"/>
        <end position="83"/>
    </location>
</feature>
<feature type="domain" description="Beta/gamma crystallin 'Greek key' 3" evidence="2">
    <location>
        <begin position="89"/>
        <end position="129"/>
    </location>
</feature>
<feature type="domain" description="Beta/gamma crystallin 'Greek key' 4" evidence="2">
    <location>
        <begin position="130"/>
        <end position="172"/>
    </location>
</feature>
<feature type="region of interest" description="Connecting peptide">
    <location>
        <begin position="84"/>
        <end position="88"/>
    </location>
</feature>
<dbReference type="EMBL" id="X79226">
    <property type="protein sequence ID" value="CAA55808.1"/>
    <property type="molecule type" value="mRNA"/>
</dbReference>
<dbReference type="PIR" id="JC5780">
    <property type="entry name" value="S45016"/>
</dbReference>
<dbReference type="SMR" id="P48646"/>
<dbReference type="GO" id="GO:0005212">
    <property type="term" value="F:structural constituent of eye lens"/>
    <property type="evidence" value="ECO:0007669"/>
    <property type="project" value="UniProtKB-KW"/>
</dbReference>
<dbReference type="GO" id="GO:0002088">
    <property type="term" value="P:lens development in camera-type eye"/>
    <property type="evidence" value="ECO:0007669"/>
    <property type="project" value="TreeGrafter"/>
</dbReference>
<dbReference type="GO" id="GO:0007601">
    <property type="term" value="P:visual perception"/>
    <property type="evidence" value="ECO:0007669"/>
    <property type="project" value="TreeGrafter"/>
</dbReference>
<dbReference type="FunFam" id="2.60.20.10:FF:000001">
    <property type="entry name" value="Crystallin gamma S"/>
    <property type="match status" value="1"/>
</dbReference>
<dbReference type="FunFam" id="2.60.20.10:FF:000003">
    <property type="entry name" value="Crystallin gamma S"/>
    <property type="match status" value="1"/>
</dbReference>
<dbReference type="Gene3D" id="2.60.20.10">
    <property type="entry name" value="Crystallins"/>
    <property type="match status" value="2"/>
</dbReference>
<dbReference type="InterPro" id="IPR050252">
    <property type="entry name" value="Beta/Gamma-Crystallin"/>
</dbReference>
<dbReference type="InterPro" id="IPR001064">
    <property type="entry name" value="Beta/gamma_crystallin"/>
</dbReference>
<dbReference type="InterPro" id="IPR011024">
    <property type="entry name" value="G_crystallin-like"/>
</dbReference>
<dbReference type="PANTHER" id="PTHR11818">
    <property type="entry name" value="BETA/GAMMA CRYSTALLIN"/>
    <property type="match status" value="1"/>
</dbReference>
<dbReference type="PANTHER" id="PTHR11818:SF129">
    <property type="entry name" value="CRYSTALLIN, GAMMA M6-RELATED"/>
    <property type="match status" value="1"/>
</dbReference>
<dbReference type="Pfam" id="PF00030">
    <property type="entry name" value="Crystall"/>
    <property type="match status" value="2"/>
</dbReference>
<dbReference type="PRINTS" id="PR01367">
    <property type="entry name" value="BGCRYSTALLIN"/>
</dbReference>
<dbReference type="SMART" id="SM00247">
    <property type="entry name" value="XTALbg"/>
    <property type="match status" value="2"/>
</dbReference>
<dbReference type="SUPFAM" id="SSF49695">
    <property type="entry name" value="gamma-Crystallin-like"/>
    <property type="match status" value="1"/>
</dbReference>
<dbReference type="PROSITE" id="PS50915">
    <property type="entry name" value="CRYSTALLIN_BETA_GAMMA"/>
    <property type="match status" value="4"/>
</dbReference>
<evidence type="ECO:0000250" key="1"/>
<evidence type="ECO:0000255" key="2">
    <source>
        <dbReference type="PROSITE-ProRule" id="PRU00028"/>
    </source>
</evidence>
<evidence type="ECO:0000305" key="3"/>
<comment type="function">
    <text>Crystallins are the dominant structural components of the vertebrate eye lens.</text>
</comment>
<comment type="domain">
    <text>Has a two-domain beta-structure, folded into four very similar Greek key motifs.</text>
</comment>
<comment type="similarity">
    <text evidence="3">Belongs to the beta/gamma-crystallin family.</text>
</comment>